<sequence length="293" mass="32839">MARVRTLADLRTEDEADEHTPLYNAETGSRDSDSTSSGGAAPRSMPIRFLELLFPHFSLKSVVLAISIVDWIFYIVTVCLDTELPLIPAANILVHFGANYPPLIKQGQVWRLLLPVFLHANFFHVFFNVFFQLRMGFTIERRYGLLKFTGLYFASAIYGNLLSATAFFCNSLKVGASTAGFGLIGIQICEMALTWHRMRHRDRMLTNMVSFVLLMVLLMFTLNGGSIDQMGHLGGLLCGFSIGMLYNKELNDKPVWYPWASAAAIGILLALPAACFPILYAVDRHCHRDLSYI</sequence>
<reference key="1">
    <citation type="journal article" date="2004" name="Curr. Opin. Microbiol.">
        <title>Host cell invasion by the apicomplexans: the significance of microneme protein proteolysis.</title>
        <authorList>
            <person name="Dowse T."/>
            <person name="Soldati D."/>
        </authorList>
    </citation>
    <scope>NUCLEOTIDE SEQUENCE [MRNA] (ISOFORM 1)</scope>
    <source>
        <strain>RH</strain>
    </source>
</reference>
<reference key="2">
    <citation type="journal article" date="2005" name="Proc. Natl. Acad. Sci. U.S.A.">
        <title>A spatially localized rhomboid protease cleaves cell surface adhesins essential for invasion by Toxoplasma.</title>
        <authorList>
            <person name="Brossier F."/>
            <person name="Jewett T.J."/>
            <person name="Sibley L.D."/>
            <person name="Urban S."/>
        </authorList>
    </citation>
    <scope>NUCLEOTIDE SEQUENCE [MRNA] (ISOFORM 2)</scope>
    <scope>FUNCTION</scope>
    <scope>SUBCELLULAR LOCATION</scope>
    <scope>DEVELOPMENTAL STAGE</scope>
</reference>
<comment type="function">
    <text evidence="4">Serine protease involved in intramembrane proteolysis and the subsequent release of polypeptides from their membrane anchors. Has no detectable activity towards MIC2.</text>
</comment>
<comment type="catalytic activity">
    <reaction>
        <text>Cleaves type-1 transmembrane domains using a catalytic dyad composed of serine and histidine that are contributed by different transmembrane domains.</text>
        <dbReference type="EC" id="3.4.21.105"/>
    </reaction>
</comment>
<comment type="subcellular location">
    <subcellularLocation>
        <location evidence="4">Cytoplasmic vesicle</location>
        <location evidence="4">Secretory vesicle</location>
        <location evidence="4">Microneme membrane</location>
        <topology evidence="4">Multi-pass membrane protein</topology>
    </subcellularLocation>
    <text>Detected in micronemes in intracellular and extracellular tachyzoites, together with MIC2.</text>
</comment>
<comment type="alternative products">
    <event type="alternative splicing"/>
    <isoform>
        <id>Q695U0-1</id>
        <name>1</name>
        <sequence type="displayed"/>
    </isoform>
    <isoform>
        <id>Q695U0-2</id>
        <name>2</name>
        <sequence type="described" ref="VSP_019081"/>
    </isoform>
</comment>
<comment type="developmental stage">
    <text evidence="4">Detected in tachyzoites, bradyzoites and sporozoites.</text>
</comment>
<comment type="similarity">
    <text evidence="6">Belongs to the peptidase S54 family.</text>
</comment>
<evidence type="ECO:0000250" key="1"/>
<evidence type="ECO:0000255" key="2"/>
<evidence type="ECO:0000256" key="3">
    <source>
        <dbReference type="SAM" id="MobiDB-lite"/>
    </source>
</evidence>
<evidence type="ECO:0000269" key="4">
    <source>
    </source>
</evidence>
<evidence type="ECO:0000303" key="5">
    <source>
    </source>
</evidence>
<evidence type="ECO:0000305" key="6"/>
<name>RHBL1_TOXGO</name>
<gene>
    <name type="primary">ROM1</name>
</gene>
<accession>Q695U0</accession>
<accession>Q696L6</accession>
<proteinExistence type="evidence at transcript level"/>
<organism>
    <name type="scientific">Toxoplasma gondii</name>
    <dbReference type="NCBI Taxonomy" id="5811"/>
    <lineage>
        <taxon>Eukaryota</taxon>
        <taxon>Sar</taxon>
        <taxon>Alveolata</taxon>
        <taxon>Apicomplexa</taxon>
        <taxon>Conoidasida</taxon>
        <taxon>Coccidia</taxon>
        <taxon>Eucoccidiorida</taxon>
        <taxon>Eimeriorina</taxon>
        <taxon>Sarcocystidae</taxon>
        <taxon>Toxoplasma</taxon>
    </lineage>
</organism>
<dbReference type="EC" id="3.4.21.105"/>
<dbReference type="EMBL" id="AY596191">
    <property type="protein sequence ID" value="AAT29065.1"/>
    <property type="molecule type" value="mRNA"/>
</dbReference>
<dbReference type="EMBL" id="AY587210">
    <property type="protein sequence ID" value="AAT84608.1"/>
    <property type="molecule type" value="mRNA"/>
</dbReference>
<dbReference type="SMR" id="Q695U0"/>
<dbReference type="MEROPS" id="S54.019"/>
<dbReference type="VEuPathDB" id="ToxoDB:TGARI_200290"/>
<dbReference type="VEuPathDB" id="ToxoDB:TGCAST_200290"/>
<dbReference type="VEuPathDB" id="ToxoDB:TGCOUG_200290"/>
<dbReference type="VEuPathDB" id="ToxoDB:TGDOM2_200290"/>
<dbReference type="VEuPathDB" id="ToxoDB:TGFOU_200290"/>
<dbReference type="VEuPathDB" id="ToxoDB:TGGT1_200290"/>
<dbReference type="VEuPathDB" id="ToxoDB:TGMAS_200290"/>
<dbReference type="VEuPathDB" id="ToxoDB:TGME49_200290"/>
<dbReference type="VEuPathDB" id="ToxoDB:TGP89_200290"/>
<dbReference type="VEuPathDB" id="ToxoDB:TGPRC2_200290"/>
<dbReference type="VEuPathDB" id="ToxoDB:TGRH88_083130"/>
<dbReference type="VEuPathDB" id="ToxoDB:TGRUB_200290"/>
<dbReference type="VEuPathDB" id="ToxoDB:TGVAND_200290"/>
<dbReference type="VEuPathDB" id="ToxoDB:TGVEG_200290"/>
<dbReference type="BRENDA" id="3.4.21.105">
    <property type="organism ID" value="6411"/>
</dbReference>
<dbReference type="GO" id="GO:0031410">
    <property type="term" value="C:cytoplasmic vesicle"/>
    <property type="evidence" value="ECO:0007669"/>
    <property type="project" value="UniProtKB-KW"/>
</dbReference>
<dbReference type="GO" id="GO:0033163">
    <property type="term" value="C:microneme membrane"/>
    <property type="evidence" value="ECO:0007669"/>
    <property type="project" value="UniProtKB-SubCell"/>
</dbReference>
<dbReference type="GO" id="GO:0004252">
    <property type="term" value="F:serine-type endopeptidase activity"/>
    <property type="evidence" value="ECO:0007669"/>
    <property type="project" value="InterPro"/>
</dbReference>
<dbReference type="GO" id="GO:0006508">
    <property type="term" value="P:proteolysis"/>
    <property type="evidence" value="ECO:0007669"/>
    <property type="project" value="UniProtKB-KW"/>
</dbReference>
<dbReference type="Gene3D" id="1.20.1540.10">
    <property type="entry name" value="Rhomboid-like"/>
    <property type="match status" value="1"/>
</dbReference>
<dbReference type="InterPro" id="IPR002610">
    <property type="entry name" value="Peptidase_S54_rhomboid-like"/>
</dbReference>
<dbReference type="InterPro" id="IPR022764">
    <property type="entry name" value="Peptidase_S54_rhomboid_dom"/>
</dbReference>
<dbReference type="InterPro" id="IPR035952">
    <property type="entry name" value="Rhomboid-like_sf"/>
</dbReference>
<dbReference type="PANTHER" id="PTHR22936:SF69">
    <property type="entry name" value="RHOMBOID-LIKE PROTEIN"/>
    <property type="match status" value="1"/>
</dbReference>
<dbReference type="PANTHER" id="PTHR22936">
    <property type="entry name" value="RHOMBOID-RELATED"/>
    <property type="match status" value="1"/>
</dbReference>
<dbReference type="Pfam" id="PF01694">
    <property type="entry name" value="Rhomboid"/>
    <property type="match status" value="1"/>
</dbReference>
<dbReference type="SUPFAM" id="SSF144091">
    <property type="entry name" value="Rhomboid-like"/>
    <property type="match status" value="1"/>
</dbReference>
<protein>
    <recommendedName>
        <fullName>Rhomboid-like protease 1</fullName>
        <ecNumber>3.4.21.105</ecNumber>
    </recommendedName>
</protein>
<feature type="chain" id="PRO_0000239074" description="Rhomboid-like protease 1">
    <location>
        <begin position="1"/>
        <end position="293"/>
    </location>
</feature>
<feature type="transmembrane region" description="Helical" evidence="2">
    <location>
        <begin position="62"/>
        <end position="82"/>
    </location>
</feature>
<feature type="transmembrane region" description="Helical" evidence="2">
    <location>
        <begin position="112"/>
        <end position="132"/>
    </location>
</feature>
<feature type="transmembrane region" description="Helical" evidence="2">
    <location>
        <begin position="148"/>
        <end position="168"/>
    </location>
</feature>
<feature type="transmembrane region" description="Helical" evidence="2">
    <location>
        <begin position="174"/>
        <end position="194"/>
    </location>
</feature>
<feature type="transmembrane region" description="Helical" evidence="2">
    <location>
        <begin position="217"/>
        <end position="237"/>
    </location>
</feature>
<feature type="transmembrane region" description="Helical" evidence="2">
    <location>
        <begin position="262"/>
        <end position="282"/>
    </location>
</feature>
<feature type="region of interest" description="Disordered" evidence="3">
    <location>
        <begin position="18"/>
        <end position="40"/>
    </location>
</feature>
<feature type="active site" description="Nucleophile" evidence="1">
    <location>
        <position position="177"/>
    </location>
</feature>
<feature type="active site" evidence="1">
    <location>
        <position position="232"/>
    </location>
</feature>
<feature type="splice variant" id="VSP_019081" description="In isoform 2." evidence="5">
    <location>
        <begin position="1"/>
        <end position="44"/>
    </location>
</feature>
<keyword id="KW-0025">Alternative splicing</keyword>
<keyword id="KW-0968">Cytoplasmic vesicle</keyword>
<keyword id="KW-0378">Hydrolase</keyword>
<keyword id="KW-0472">Membrane</keyword>
<keyword id="KW-0645">Protease</keyword>
<keyword id="KW-0720">Serine protease</keyword>
<keyword id="KW-0812">Transmembrane</keyword>
<keyword id="KW-1133">Transmembrane helix</keyword>